<accession>Q9SML4</accession>
<dbReference type="EC" id="2.3.1.74"/>
<dbReference type="EMBL" id="AJ012822">
    <property type="protein sequence ID" value="CAA10190.1"/>
    <property type="molecule type" value="mRNA"/>
</dbReference>
<dbReference type="SMR" id="Q9SML4"/>
<dbReference type="STRING" id="3827.Q9SML4"/>
<dbReference type="UniPathway" id="UPA00154"/>
<dbReference type="Proteomes" id="UP000087171">
    <property type="component" value="Unplaced"/>
</dbReference>
<dbReference type="GO" id="GO:0016210">
    <property type="term" value="F:naringenin-chalcone synthase activity"/>
    <property type="evidence" value="ECO:0007669"/>
    <property type="project" value="UniProtKB-EC"/>
</dbReference>
<dbReference type="GO" id="GO:0009813">
    <property type="term" value="P:flavonoid biosynthetic process"/>
    <property type="evidence" value="ECO:0007669"/>
    <property type="project" value="UniProtKB-UniPathway"/>
</dbReference>
<dbReference type="GO" id="GO:0030639">
    <property type="term" value="P:polyketide biosynthetic process"/>
    <property type="evidence" value="ECO:0007669"/>
    <property type="project" value="TreeGrafter"/>
</dbReference>
<dbReference type="CDD" id="cd00831">
    <property type="entry name" value="CHS_like"/>
    <property type="match status" value="1"/>
</dbReference>
<dbReference type="FunFam" id="3.40.47.10:FF:000014">
    <property type="entry name" value="Chalcone synthase 1"/>
    <property type="match status" value="1"/>
</dbReference>
<dbReference type="FunFam" id="3.40.47.10:FF:000025">
    <property type="entry name" value="Chalcone synthase 2"/>
    <property type="match status" value="1"/>
</dbReference>
<dbReference type="Gene3D" id="3.40.47.10">
    <property type="match status" value="2"/>
</dbReference>
<dbReference type="InterPro" id="IPR012328">
    <property type="entry name" value="Chalcone/stilbene_synt_C"/>
</dbReference>
<dbReference type="InterPro" id="IPR001099">
    <property type="entry name" value="Chalcone/stilbene_synt_N"/>
</dbReference>
<dbReference type="InterPro" id="IPR018088">
    <property type="entry name" value="Chalcone/stilbene_synthase_AS"/>
</dbReference>
<dbReference type="InterPro" id="IPR011141">
    <property type="entry name" value="Polyketide_synthase_type-III"/>
</dbReference>
<dbReference type="InterPro" id="IPR016039">
    <property type="entry name" value="Thiolase-like"/>
</dbReference>
<dbReference type="PANTHER" id="PTHR11877:SF62">
    <property type="entry name" value="CHALCONE SYNTHASE 7"/>
    <property type="match status" value="1"/>
</dbReference>
<dbReference type="PANTHER" id="PTHR11877">
    <property type="entry name" value="HYDROXYMETHYLGLUTARYL-COA SYNTHASE"/>
    <property type="match status" value="1"/>
</dbReference>
<dbReference type="Pfam" id="PF02797">
    <property type="entry name" value="Chal_sti_synt_C"/>
    <property type="match status" value="1"/>
</dbReference>
<dbReference type="Pfam" id="PF00195">
    <property type="entry name" value="Chal_sti_synt_N"/>
    <property type="match status" value="1"/>
</dbReference>
<dbReference type="PIRSF" id="PIRSF000451">
    <property type="entry name" value="PKS_III"/>
    <property type="match status" value="1"/>
</dbReference>
<dbReference type="SUPFAM" id="SSF53901">
    <property type="entry name" value="Thiolase-like"/>
    <property type="match status" value="2"/>
</dbReference>
<dbReference type="PROSITE" id="PS00441">
    <property type="entry name" value="CHALCONE_SYNTH"/>
    <property type="match status" value="1"/>
</dbReference>
<protein>
    <recommendedName>
        <fullName>Chalcone synthase 1</fullName>
        <ecNumber>2.3.1.74</ecNumber>
    </recommendedName>
    <alternativeName>
        <fullName>Naringenin-chalcone synthase 1</fullName>
    </alternativeName>
</protein>
<evidence type="ECO:0000255" key="1">
    <source>
        <dbReference type="PROSITE-ProRule" id="PRU10023"/>
    </source>
</evidence>
<evidence type="ECO:0000305" key="2"/>
<gene>
    <name type="primary">CHS1</name>
</gene>
<proteinExistence type="evidence at transcript level"/>
<feature type="chain" id="PRO_0000215967" description="Chalcone synthase 1">
    <location>
        <begin position="1"/>
        <end position="389"/>
    </location>
</feature>
<feature type="active site" evidence="1">
    <location>
        <position position="164"/>
    </location>
</feature>
<reference key="1">
    <citation type="online journal article" date="1999" name="Plant Gene Register">
        <title>Isolation of a full length chalcone synthase cDNA from infected chickpea plants (Cicer arietinum L.).</title>
        <authorList>
            <person name="Hanselle T."/>
            <person name="Schwenger-Erger C."/>
            <person name="Barz W."/>
        </authorList>
        <locator>PGR99-100</locator>
    </citation>
    <scope>NUCLEOTIDE SEQUENCE [MRNA]</scope>
    <source>
        <strain>cv. ILC 3279</strain>
        <tissue>Leaf</tissue>
    </source>
</reference>
<organism>
    <name type="scientific">Cicer arietinum</name>
    <name type="common">Chickpea</name>
    <name type="synonym">Garbanzo</name>
    <dbReference type="NCBI Taxonomy" id="3827"/>
    <lineage>
        <taxon>Eukaryota</taxon>
        <taxon>Viridiplantae</taxon>
        <taxon>Streptophyta</taxon>
        <taxon>Embryophyta</taxon>
        <taxon>Tracheophyta</taxon>
        <taxon>Spermatophyta</taxon>
        <taxon>Magnoliopsida</taxon>
        <taxon>eudicotyledons</taxon>
        <taxon>Gunneridae</taxon>
        <taxon>Pentapetalae</taxon>
        <taxon>rosids</taxon>
        <taxon>fabids</taxon>
        <taxon>Fabales</taxon>
        <taxon>Fabaceae</taxon>
        <taxon>Papilionoideae</taxon>
        <taxon>50 kb inversion clade</taxon>
        <taxon>NPAAA clade</taxon>
        <taxon>Hologalegina</taxon>
        <taxon>IRL clade</taxon>
        <taxon>Cicereae</taxon>
        <taxon>Cicer</taxon>
    </lineage>
</organism>
<name>CHS1_CICAR</name>
<comment type="function">
    <text>The primary product of this enzyme is 4,2',4',6'-tetrahydroxychalcone (also termed naringenin-chalcone or chalcone) which can under specific conditions spontaneously isomerize into naringenin.</text>
</comment>
<comment type="catalytic activity">
    <reaction evidence="1">
        <text>(E)-4-coumaroyl-CoA + 3 malonyl-CoA + 3 H(+) = 2',4,4',6'-tetrahydroxychalcone + 3 CO2 + 4 CoA</text>
        <dbReference type="Rhea" id="RHEA:11128"/>
        <dbReference type="ChEBI" id="CHEBI:15378"/>
        <dbReference type="ChEBI" id="CHEBI:15413"/>
        <dbReference type="ChEBI" id="CHEBI:16526"/>
        <dbReference type="ChEBI" id="CHEBI:57287"/>
        <dbReference type="ChEBI" id="CHEBI:57384"/>
        <dbReference type="ChEBI" id="CHEBI:85008"/>
        <dbReference type="EC" id="2.3.1.74"/>
    </reaction>
</comment>
<comment type="pathway">
    <text>Secondary metabolite biosynthesis; flavonoid biosynthesis.</text>
</comment>
<comment type="similarity">
    <text evidence="2">Belongs to the thiolase-like superfamily. Chalcone/stilbene synthases family.</text>
</comment>
<keyword id="KW-0012">Acyltransferase</keyword>
<keyword id="KW-0284">Flavonoid biosynthesis</keyword>
<keyword id="KW-1185">Reference proteome</keyword>
<keyword id="KW-0808">Transferase</keyword>
<sequence>MVSVSEIRKAQRAEGPATILAIGTANPSNRVEQSTYPDFYFKITNSEHKVELKQKFQRMCDKSMIKSRYMYLTEEILKENPSVCEYMAPSLDVRQDMVVVEVPRLGKEAAVKAIKEWGQPKSKITHLIFCTTSGVDMPGADYQLTKLLGLRPYVKRYMMYQQGCFAGGTVLRLAKDLAENNKGARVLVVCSEVTAVTFRGPSDTHLDSLVGQALFGDGAAALIVGSDPIPEIEKPIFEMVWTAQTIAPDSEGAIDGHLREAGLTFHLLKDVPGIVSKNIDKALIEAFQPLNISDYNSIFWIAHPGGPAILDQVEEKLALKPEKMRATREVLSEYGNMSSACVLFILDEMRRKSAKDGLKTTGEGLEWGVLFGFGPGLTIETVVLHSVAI</sequence>